<comment type="subcellular location">
    <subcellularLocation>
        <location evidence="1 2">Nucleus</location>
    </subcellularLocation>
</comment>
<comment type="alternative products">
    <event type="alternative splicing"/>
    <isoform>
        <id>Q10EC6-1</id>
        <name>1</name>
        <sequence type="displayed"/>
    </isoform>
    <isoform>
        <id>Q10EC6-2</id>
        <name>2</name>
        <sequence type="described" ref="VSP_036184"/>
    </isoform>
</comment>
<comment type="similarity">
    <text evidence="2">Belongs to the TALE/KNOX homeobox family.</text>
</comment>
<comment type="sequence caution" evidence="4">
    <conflict type="erroneous gene model prediction">
        <sequence resource="EMBL-CDS" id="AAP68879"/>
    </conflict>
</comment>
<reference key="1">
    <citation type="journal article" date="2005" name="Genome Res.">
        <title>Sequence, annotation, and analysis of synteny between rice chromosome 3 and diverged grass species.</title>
        <authorList>
            <consortium name="The rice chromosome 3 sequencing consortium"/>
            <person name="Buell C.R."/>
            <person name="Yuan Q."/>
            <person name="Ouyang S."/>
            <person name="Liu J."/>
            <person name="Zhu W."/>
            <person name="Wang A."/>
            <person name="Maiti R."/>
            <person name="Haas B."/>
            <person name="Wortman J."/>
            <person name="Pertea M."/>
            <person name="Jones K.M."/>
            <person name="Kim M."/>
            <person name="Overton L."/>
            <person name="Tsitrin T."/>
            <person name="Fadrosh D."/>
            <person name="Bera J."/>
            <person name="Weaver B."/>
            <person name="Jin S."/>
            <person name="Johri S."/>
            <person name="Reardon M."/>
            <person name="Webb K."/>
            <person name="Hill J."/>
            <person name="Moffat K."/>
            <person name="Tallon L."/>
            <person name="Van Aken S."/>
            <person name="Lewis M."/>
            <person name="Utterback T."/>
            <person name="Feldblyum T."/>
            <person name="Zismann V."/>
            <person name="Iobst S."/>
            <person name="Hsiao J."/>
            <person name="de Vazeille A.R."/>
            <person name="Salzberg S.L."/>
            <person name="White O."/>
            <person name="Fraser C.M."/>
            <person name="Yu Y."/>
            <person name="Kim H."/>
            <person name="Rambo T."/>
            <person name="Currie J."/>
            <person name="Collura K."/>
            <person name="Kernodle-Thompson S."/>
            <person name="Wei F."/>
            <person name="Kudrna K."/>
            <person name="Ammiraju J.S.S."/>
            <person name="Luo M."/>
            <person name="Goicoechea J.L."/>
            <person name="Wing R.A."/>
            <person name="Henry D."/>
            <person name="Oates R."/>
            <person name="Palmer M."/>
            <person name="Pries G."/>
            <person name="Saski C."/>
            <person name="Simmons J."/>
            <person name="Soderlund C."/>
            <person name="Nelson W."/>
            <person name="de la Bastide M."/>
            <person name="Spiegel L."/>
            <person name="Nascimento L."/>
            <person name="Huang E."/>
            <person name="Preston R."/>
            <person name="Zutavern T."/>
            <person name="Palmer L."/>
            <person name="O'Shaughnessy A."/>
            <person name="Dike S."/>
            <person name="McCombie W.R."/>
            <person name="Minx P."/>
            <person name="Cordum H."/>
            <person name="Wilson R."/>
            <person name="Jin W."/>
            <person name="Lee H.R."/>
            <person name="Jiang J."/>
            <person name="Jackson S."/>
        </authorList>
    </citation>
    <scope>NUCLEOTIDE SEQUENCE [LARGE SCALE GENOMIC DNA]</scope>
    <source>
        <strain>cv. Nipponbare</strain>
    </source>
</reference>
<reference key="2">
    <citation type="journal article" date="2005" name="Nature">
        <title>The map-based sequence of the rice genome.</title>
        <authorList>
            <consortium name="International rice genome sequencing project (IRGSP)"/>
        </authorList>
    </citation>
    <scope>NUCLEOTIDE SEQUENCE [LARGE SCALE GENOMIC DNA]</scope>
    <source>
        <strain>cv. Nipponbare</strain>
    </source>
</reference>
<reference key="3">
    <citation type="journal article" date="2013" name="Rice">
        <title>Improvement of the Oryza sativa Nipponbare reference genome using next generation sequence and optical map data.</title>
        <authorList>
            <person name="Kawahara Y."/>
            <person name="de la Bastide M."/>
            <person name="Hamilton J.P."/>
            <person name="Kanamori H."/>
            <person name="McCombie W.R."/>
            <person name="Ouyang S."/>
            <person name="Schwartz D.C."/>
            <person name="Tanaka T."/>
            <person name="Wu J."/>
            <person name="Zhou S."/>
            <person name="Childs K.L."/>
            <person name="Davidson R.M."/>
            <person name="Lin H."/>
            <person name="Quesada-Ocampo L."/>
            <person name="Vaillancourt B."/>
            <person name="Sakai H."/>
            <person name="Lee S.S."/>
            <person name="Kim J."/>
            <person name="Numa H."/>
            <person name="Itoh T."/>
            <person name="Buell C.R."/>
            <person name="Matsumoto T."/>
        </authorList>
    </citation>
    <scope>GENOME REANNOTATION</scope>
    <source>
        <strain>cv. Nipponbare</strain>
    </source>
</reference>
<reference key="4">
    <citation type="journal article" date="2005" name="PLoS Biol.">
        <title>The genomes of Oryza sativa: a history of duplications.</title>
        <authorList>
            <person name="Yu J."/>
            <person name="Wang J."/>
            <person name="Lin W."/>
            <person name="Li S."/>
            <person name="Li H."/>
            <person name="Zhou J."/>
            <person name="Ni P."/>
            <person name="Dong W."/>
            <person name="Hu S."/>
            <person name="Zeng C."/>
            <person name="Zhang J."/>
            <person name="Zhang Y."/>
            <person name="Li R."/>
            <person name="Xu Z."/>
            <person name="Li S."/>
            <person name="Li X."/>
            <person name="Zheng H."/>
            <person name="Cong L."/>
            <person name="Lin L."/>
            <person name="Yin J."/>
            <person name="Geng J."/>
            <person name="Li G."/>
            <person name="Shi J."/>
            <person name="Liu J."/>
            <person name="Lv H."/>
            <person name="Li J."/>
            <person name="Wang J."/>
            <person name="Deng Y."/>
            <person name="Ran L."/>
            <person name="Shi X."/>
            <person name="Wang X."/>
            <person name="Wu Q."/>
            <person name="Li C."/>
            <person name="Ren X."/>
            <person name="Wang J."/>
            <person name="Wang X."/>
            <person name="Li D."/>
            <person name="Liu D."/>
            <person name="Zhang X."/>
            <person name="Ji Z."/>
            <person name="Zhao W."/>
            <person name="Sun Y."/>
            <person name="Zhang Z."/>
            <person name="Bao J."/>
            <person name="Han Y."/>
            <person name="Dong L."/>
            <person name="Ji J."/>
            <person name="Chen P."/>
            <person name="Wu S."/>
            <person name="Liu J."/>
            <person name="Xiao Y."/>
            <person name="Bu D."/>
            <person name="Tan J."/>
            <person name="Yang L."/>
            <person name="Ye C."/>
            <person name="Zhang J."/>
            <person name="Xu J."/>
            <person name="Zhou Y."/>
            <person name="Yu Y."/>
            <person name="Zhang B."/>
            <person name="Zhuang S."/>
            <person name="Wei H."/>
            <person name="Liu B."/>
            <person name="Lei M."/>
            <person name="Yu H."/>
            <person name="Li Y."/>
            <person name="Xu H."/>
            <person name="Wei S."/>
            <person name="He X."/>
            <person name="Fang L."/>
            <person name="Zhang Z."/>
            <person name="Zhang Y."/>
            <person name="Huang X."/>
            <person name="Su Z."/>
            <person name="Tong W."/>
            <person name="Li J."/>
            <person name="Tong Z."/>
            <person name="Li S."/>
            <person name="Ye J."/>
            <person name="Wang L."/>
            <person name="Fang L."/>
            <person name="Lei T."/>
            <person name="Chen C.-S."/>
            <person name="Chen H.-C."/>
            <person name="Xu Z."/>
            <person name="Li H."/>
            <person name="Huang H."/>
            <person name="Zhang F."/>
            <person name="Xu H."/>
            <person name="Li N."/>
            <person name="Zhao C."/>
            <person name="Li S."/>
            <person name="Dong L."/>
            <person name="Huang Y."/>
            <person name="Li L."/>
            <person name="Xi Y."/>
            <person name="Qi Q."/>
            <person name="Li W."/>
            <person name="Zhang B."/>
            <person name="Hu W."/>
            <person name="Zhang Y."/>
            <person name="Tian X."/>
            <person name="Jiao Y."/>
            <person name="Liang X."/>
            <person name="Jin J."/>
            <person name="Gao L."/>
            <person name="Zheng W."/>
            <person name="Hao B."/>
            <person name="Liu S.-M."/>
            <person name="Wang W."/>
            <person name="Yuan L."/>
            <person name="Cao M."/>
            <person name="McDermott J."/>
            <person name="Samudrala R."/>
            <person name="Wang J."/>
            <person name="Wong G.K.-S."/>
            <person name="Yang H."/>
        </authorList>
    </citation>
    <scope>NUCLEOTIDE SEQUENCE [LARGE SCALE GENOMIC DNA]</scope>
    <source>
        <strain>cv. Nipponbare</strain>
    </source>
</reference>
<reference key="5">
    <citation type="journal article" date="2008" name="FEBS J.">
        <title>Genome-wide identification, classification, evolutionary expansion and expression analyses of homeobox genes in rice.</title>
        <authorList>
            <person name="Jain M."/>
            <person name="Tyagi A.K."/>
            <person name="Khurana J.P."/>
        </authorList>
    </citation>
    <scope>GENE FAMILY</scope>
    <scope>NOMENCLATURE</scope>
</reference>
<protein>
    <recommendedName>
        <fullName>Homeobox protein knotted-1-like 9</fullName>
    </recommendedName>
</protein>
<feature type="chain" id="PRO_0000360011" description="Homeobox protein knotted-1-like 9">
    <location>
        <begin position="1"/>
        <end position="347"/>
    </location>
</feature>
<feature type="domain" description="ELK" evidence="2">
    <location>
        <begin position="208"/>
        <end position="228"/>
    </location>
</feature>
<feature type="DNA-binding region" description="Homeobox; TALE-type" evidence="1">
    <location>
        <begin position="229"/>
        <end position="293"/>
    </location>
</feature>
<feature type="region of interest" description="Disordered" evidence="3">
    <location>
        <begin position="1"/>
        <end position="36"/>
    </location>
</feature>
<feature type="region of interest" description="Disordered" evidence="3">
    <location>
        <begin position="122"/>
        <end position="145"/>
    </location>
</feature>
<feature type="region of interest" description="Disordered" evidence="3">
    <location>
        <begin position="179"/>
        <end position="206"/>
    </location>
</feature>
<feature type="compositionally biased region" description="Low complexity" evidence="3">
    <location>
        <begin position="1"/>
        <end position="17"/>
    </location>
</feature>
<feature type="compositionally biased region" description="Pro residues" evidence="3">
    <location>
        <begin position="22"/>
        <end position="36"/>
    </location>
</feature>
<feature type="compositionally biased region" description="Acidic residues" evidence="3">
    <location>
        <begin position="188"/>
        <end position="203"/>
    </location>
</feature>
<feature type="splice variant" id="VSP_036184" description="In isoform 2." evidence="4">
    <original>S</original>
    <variation>SVRTHIYASHLINSTTFFCTKLDLMKMRELLGCTCVYEQ</variation>
    <location>
        <position position="260"/>
    </location>
</feature>
<proteinExistence type="inferred from homology"/>
<evidence type="ECO:0000255" key="1">
    <source>
        <dbReference type="PROSITE-ProRule" id="PRU00108"/>
    </source>
</evidence>
<evidence type="ECO:0000255" key="2">
    <source>
        <dbReference type="PROSITE-ProRule" id="PRU00559"/>
    </source>
</evidence>
<evidence type="ECO:0000256" key="3">
    <source>
        <dbReference type="SAM" id="MobiDB-lite"/>
    </source>
</evidence>
<evidence type="ECO:0000305" key="4"/>
<sequence length="347" mass="37007">MESFASLAGGGSSSTTARLPELIPPENPDRISPPPLLYQLLAGSASSARHGHGHHHGGGGGAAAAAVQGLQVSPAGAEAAMKAEIMSHPQYSALLAAYLGCKKVGAPPDVLTKLTAVPAAQQQLDAADGHPRRRHEPRRDDDVPDHQLDQFMHADEVQGGAGAADPGSRGVLQLDSIADSNCEGTGSSEEEQDTSCPEAEEIDPSDKQLKHQLLMKYGGSLGDLRQAFSKRTKKGKLPKEARLKLLHWWELHYDKWPYPSEVEKMTLAQTTGLDQKQISNWFINQRKRHWKPTPVAGMTFPTVEAAGGGFRHSGHDGGLAAAAAAAALPLYMGSWPFVVDGMYRLGS</sequence>
<keyword id="KW-0025">Alternative splicing</keyword>
<keyword id="KW-0238">DNA-binding</keyword>
<keyword id="KW-0371">Homeobox</keyword>
<keyword id="KW-0539">Nucleus</keyword>
<keyword id="KW-1185">Reference proteome</keyword>
<accession>Q10EC6</accession>
<accession>Q7XZX5</accession>
<dbReference type="EMBL" id="AC092781">
    <property type="protein sequence ID" value="AAP68879.1"/>
    <property type="status" value="ALT_SEQ"/>
    <property type="molecule type" value="Genomic_DNA"/>
</dbReference>
<dbReference type="EMBL" id="DP000009">
    <property type="protein sequence ID" value="ABF99096.1"/>
    <property type="molecule type" value="Genomic_DNA"/>
</dbReference>
<dbReference type="EMBL" id="AP014959">
    <property type="status" value="NOT_ANNOTATED_CDS"/>
    <property type="molecule type" value="Genomic_DNA"/>
</dbReference>
<dbReference type="EMBL" id="CM000140">
    <property type="status" value="NOT_ANNOTATED_CDS"/>
    <property type="molecule type" value="Genomic_DNA"/>
</dbReference>
<dbReference type="RefSeq" id="XP_015630164.1">
    <property type="nucleotide sequence ID" value="XM_015774678.1"/>
</dbReference>
<dbReference type="SMR" id="Q10EC6"/>
<dbReference type="FunCoup" id="Q10EC6">
    <property type="interactions" value="233"/>
</dbReference>
<dbReference type="STRING" id="39947.Q10EC6"/>
<dbReference type="PaxDb" id="39947-Q10EC6"/>
<dbReference type="InParanoid" id="Q10EC6"/>
<dbReference type="Proteomes" id="UP000000763">
    <property type="component" value="Chromosome 3"/>
</dbReference>
<dbReference type="Proteomes" id="UP000007752">
    <property type="component" value="Chromosome 3"/>
</dbReference>
<dbReference type="Proteomes" id="UP000059680">
    <property type="component" value="Chromosome 3"/>
</dbReference>
<dbReference type="GO" id="GO:0005634">
    <property type="term" value="C:nucleus"/>
    <property type="evidence" value="ECO:0000318"/>
    <property type="project" value="GO_Central"/>
</dbReference>
<dbReference type="GO" id="GO:0003677">
    <property type="term" value="F:DNA binding"/>
    <property type="evidence" value="ECO:0007669"/>
    <property type="project" value="UniProtKB-KW"/>
</dbReference>
<dbReference type="GO" id="GO:0000981">
    <property type="term" value="F:DNA-binding transcription factor activity, RNA polymerase II-specific"/>
    <property type="evidence" value="ECO:0007669"/>
    <property type="project" value="InterPro"/>
</dbReference>
<dbReference type="CDD" id="cd00086">
    <property type="entry name" value="homeodomain"/>
    <property type="match status" value="1"/>
</dbReference>
<dbReference type="Gene3D" id="1.10.10.60">
    <property type="entry name" value="Homeodomain-like"/>
    <property type="match status" value="1"/>
</dbReference>
<dbReference type="InterPro" id="IPR005539">
    <property type="entry name" value="ELK_dom"/>
</dbReference>
<dbReference type="InterPro" id="IPR001356">
    <property type="entry name" value="HD"/>
</dbReference>
<dbReference type="InterPro" id="IPR017970">
    <property type="entry name" value="Homeobox_CS"/>
</dbReference>
<dbReference type="InterPro" id="IPR009057">
    <property type="entry name" value="Homeodomain-like_sf"/>
</dbReference>
<dbReference type="InterPro" id="IPR008422">
    <property type="entry name" value="KN_HD"/>
</dbReference>
<dbReference type="InterPro" id="IPR005540">
    <property type="entry name" value="KNOX1"/>
</dbReference>
<dbReference type="InterPro" id="IPR050224">
    <property type="entry name" value="TALE_homeobox"/>
</dbReference>
<dbReference type="PANTHER" id="PTHR11850">
    <property type="entry name" value="HOMEOBOX PROTEIN TRANSCRIPTION FACTORS"/>
    <property type="match status" value="1"/>
</dbReference>
<dbReference type="Pfam" id="PF03789">
    <property type="entry name" value="ELK"/>
    <property type="match status" value="1"/>
</dbReference>
<dbReference type="Pfam" id="PF05920">
    <property type="entry name" value="Homeobox_KN"/>
    <property type="match status" value="1"/>
</dbReference>
<dbReference type="Pfam" id="PF03790">
    <property type="entry name" value="KNOX1"/>
    <property type="match status" value="1"/>
</dbReference>
<dbReference type="SMART" id="SM01188">
    <property type="entry name" value="ELK"/>
    <property type="match status" value="1"/>
</dbReference>
<dbReference type="SMART" id="SM00389">
    <property type="entry name" value="HOX"/>
    <property type="match status" value="1"/>
</dbReference>
<dbReference type="SMART" id="SM01255">
    <property type="entry name" value="KNOX1"/>
    <property type="match status" value="1"/>
</dbReference>
<dbReference type="SUPFAM" id="SSF46689">
    <property type="entry name" value="Homeodomain-like"/>
    <property type="match status" value="1"/>
</dbReference>
<dbReference type="PROSITE" id="PS51213">
    <property type="entry name" value="ELK"/>
    <property type="match status" value="1"/>
</dbReference>
<dbReference type="PROSITE" id="PS00027">
    <property type="entry name" value="HOMEOBOX_1"/>
    <property type="match status" value="1"/>
</dbReference>
<dbReference type="PROSITE" id="PS50071">
    <property type="entry name" value="HOMEOBOX_2"/>
    <property type="match status" value="1"/>
</dbReference>
<organism>
    <name type="scientific">Oryza sativa subsp. japonica</name>
    <name type="common">Rice</name>
    <dbReference type="NCBI Taxonomy" id="39947"/>
    <lineage>
        <taxon>Eukaryota</taxon>
        <taxon>Viridiplantae</taxon>
        <taxon>Streptophyta</taxon>
        <taxon>Embryophyta</taxon>
        <taxon>Tracheophyta</taxon>
        <taxon>Spermatophyta</taxon>
        <taxon>Magnoliopsida</taxon>
        <taxon>Liliopsida</taxon>
        <taxon>Poales</taxon>
        <taxon>Poaceae</taxon>
        <taxon>BOP clade</taxon>
        <taxon>Oryzoideae</taxon>
        <taxon>Oryzeae</taxon>
        <taxon>Oryzinae</taxon>
        <taxon>Oryza</taxon>
        <taxon>Oryza sativa</taxon>
    </lineage>
</organism>
<gene>
    <name type="ordered locus">Os03g0772100</name>
    <name type="ordered locus">LOC_Os03g56140</name>
    <name type="ORF">OsJ_012214</name>
    <name type="ORF">OSJNBb0094O03.2</name>
</gene>
<name>KNOS9_ORYSJ</name>